<dbReference type="EC" id="2.7.11.1"/>
<dbReference type="EMBL" id="U55848">
    <property type="protein sequence ID" value="AAB16904.1"/>
    <property type="molecule type" value="mRNA"/>
</dbReference>
<dbReference type="EMBL" id="X94695">
    <property type="protein sequence ID" value="CAA64358.1"/>
    <property type="status" value="ALT_INIT"/>
    <property type="molecule type" value="mRNA"/>
</dbReference>
<dbReference type="EMBL" id="AE014298">
    <property type="protein sequence ID" value="AAF48192.1"/>
    <property type="molecule type" value="Genomic_DNA"/>
</dbReference>
<dbReference type="EMBL" id="AE014298">
    <property type="protein sequence ID" value="AAN09313.1"/>
    <property type="molecule type" value="Genomic_DNA"/>
</dbReference>
<dbReference type="EMBL" id="AY069346">
    <property type="protein sequence ID" value="AAL39491.1"/>
    <property type="molecule type" value="mRNA"/>
</dbReference>
<dbReference type="RefSeq" id="NP_001162737.1">
    <property type="nucleotide sequence ID" value="NM_001169266.3"/>
</dbReference>
<dbReference type="RefSeq" id="NP_001285163.1">
    <property type="nucleotide sequence ID" value="NM_001298234.1"/>
</dbReference>
<dbReference type="RefSeq" id="NP_001285164.1">
    <property type="nucleotide sequence ID" value="NM_001298235.1"/>
</dbReference>
<dbReference type="RefSeq" id="NP_511140.1">
    <property type="nucleotide sequence ID" value="NM_078585.6"/>
</dbReference>
<dbReference type="RefSeq" id="NP_727631.1">
    <property type="nucleotide sequence ID" value="NM_167331.4"/>
</dbReference>
<dbReference type="RefSeq" id="NP_727632.1">
    <property type="nucleotide sequence ID" value="NM_167332.3"/>
</dbReference>
<dbReference type="SMR" id="P54367"/>
<dbReference type="BioGRID" id="58615">
    <property type="interactions" value="16"/>
</dbReference>
<dbReference type="ComplexPortal" id="CPX-2417">
    <property type="entry name" value="Beta-catenin destruction complex, Apc2 variant"/>
</dbReference>
<dbReference type="ComplexPortal" id="CPX-2418">
    <property type="entry name" value="Beta-catenin destruction complex, Apc variant"/>
</dbReference>
<dbReference type="DIP" id="DIP-22041N"/>
<dbReference type="FunCoup" id="P54367">
    <property type="interactions" value="1005"/>
</dbReference>
<dbReference type="IntAct" id="P54367">
    <property type="interactions" value="18"/>
</dbReference>
<dbReference type="STRING" id="7227.FBpp0073513"/>
<dbReference type="PaxDb" id="7227-FBpp0073513"/>
<dbReference type="EnsemblMetazoa" id="FBtr0073680">
    <property type="protein sequence ID" value="FBpp0073513"/>
    <property type="gene ID" value="FBgn0015024"/>
</dbReference>
<dbReference type="EnsemblMetazoa" id="FBtr0073682">
    <property type="protein sequence ID" value="FBpp0073515"/>
    <property type="gene ID" value="FBgn0015024"/>
</dbReference>
<dbReference type="EnsemblMetazoa" id="FBtr0300380">
    <property type="protein sequence ID" value="FBpp0289609"/>
    <property type="gene ID" value="FBgn0015024"/>
</dbReference>
<dbReference type="EnsemblMetazoa" id="FBtr0340408">
    <property type="protein sequence ID" value="FBpp0309354"/>
    <property type="gene ID" value="FBgn0015024"/>
</dbReference>
<dbReference type="EnsemblMetazoa" id="FBtr0345162">
    <property type="protein sequence ID" value="FBpp0311372"/>
    <property type="gene ID" value="FBgn0015024"/>
</dbReference>
<dbReference type="EnsemblMetazoa" id="FBtr0345163">
    <property type="protein sequence ID" value="FBpp0311373"/>
    <property type="gene ID" value="FBgn0015024"/>
</dbReference>
<dbReference type="GeneID" id="32221"/>
<dbReference type="KEGG" id="dme:Dmel_CG2028"/>
<dbReference type="UCSC" id="CG2028-RC">
    <property type="organism name" value="d. melanogaster"/>
</dbReference>
<dbReference type="AGR" id="FB:FBgn0015024"/>
<dbReference type="CTD" id="32221"/>
<dbReference type="FlyBase" id="FBgn0015024">
    <property type="gene designation" value="CkIalpha"/>
</dbReference>
<dbReference type="VEuPathDB" id="VectorBase:FBgn0015024"/>
<dbReference type="eggNOG" id="KOG1163">
    <property type="taxonomic scope" value="Eukaryota"/>
</dbReference>
<dbReference type="GeneTree" id="ENSGT00940000153700"/>
<dbReference type="HOGENOM" id="CLU_019279_2_7_1"/>
<dbReference type="InParanoid" id="P54367"/>
<dbReference type="OMA" id="ESRVYKY"/>
<dbReference type="OrthoDB" id="5800476at2759"/>
<dbReference type="PhylomeDB" id="P54367"/>
<dbReference type="BRENDA" id="2.7.11.1">
    <property type="organism ID" value="1994"/>
</dbReference>
<dbReference type="Reactome" id="R-DME-195253">
    <property type="pathway name" value="Degradation of beta-catenin by the destruction complex"/>
</dbReference>
<dbReference type="Reactome" id="R-DME-196299">
    <property type="pathway name" value="Beta-catenin phosphorylation cascade"/>
</dbReference>
<dbReference type="Reactome" id="R-DME-209155">
    <property type="pathway name" value="Phosphorylation of AXN and APC"/>
</dbReference>
<dbReference type="Reactome" id="R-DME-209159">
    <property type="pathway name" value="Assembly of the CI containing complexes"/>
</dbReference>
<dbReference type="Reactome" id="R-DME-209190">
    <property type="pathway name" value="Phosphorylation of CI"/>
</dbReference>
<dbReference type="Reactome" id="R-DME-209214">
    <property type="pathway name" value="Phosphorylation of SMO"/>
</dbReference>
<dbReference type="Reactome" id="R-DME-209360">
    <property type="pathway name" value="Ubiquitination and proteolysis of phosphorylated CI"/>
</dbReference>
<dbReference type="Reactome" id="R-DME-209396">
    <property type="pathway name" value="Phosphorylation of ARM"/>
</dbReference>
<dbReference type="Reactome" id="R-DME-209413">
    <property type="pathway name" value="Assembly of the 'destruction complex'"/>
</dbReference>
<dbReference type="Reactome" id="R-DME-209440">
    <property type="pathway name" value="Recruitment of the 'destruction complex' to the receptor complex, the degradation of AXN and release of ARM"/>
</dbReference>
<dbReference type="Reactome" id="R-DME-209461">
    <property type="pathway name" value="Ubiquitination and degradation of phosphorylated ARM"/>
</dbReference>
<dbReference type="Reactome" id="R-DME-432553">
    <property type="pathway name" value="Phosphorylation of PER and TIM"/>
</dbReference>
<dbReference type="Reactome" id="R-DME-5610785">
    <property type="pathway name" value="GLI3 is processed to GLI3R by the proteasome"/>
</dbReference>
<dbReference type="Reactome" id="R-DME-5635838">
    <property type="pathway name" value="Activation of SMO"/>
</dbReference>
<dbReference type="SignaLink" id="P54367"/>
<dbReference type="BioGRID-ORCS" id="32221">
    <property type="hits" value="1 hit in 3 CRISPR screens"/>
</dbReference>
<dbReference type="GenomeRNAi" id="32221"/>
<dbReference type="PRO" id="PR:P54367"/>
<dbReference type="Proteomes" id="UP000000803">
    <property type="component" value="Chromosome X"/>
</dbReference>
<dbReference type="Bgee" id="FBgn0015024">
    <property type="expression patterns" value="Expressed in dopaminergic PAM neuron (Drosophila) in brain and 282 other cell types or tissues"/>
</dbReference>
<dbReference type="ExpressionAtlas" id="P54367">
    <property type="expression patterns" value="baseline and differential"/>
</dbReference>
<dbReference type="GO" id="GO:0030877">
    <property type="term" value="C:beta-catenin destruction complex"/>
    <property type="evidence" value="ECO:0000250"/>
    <property type="project" value="ParkinsonsUK-UCL"/>
</dbReference>
<dbReference type="GO" id="GO:0005737">
    <property type="term" value="C:cytoplasm"/>
    <property type="evidence" value="ECO:0000314"/>
    <property type="project" value="UniProtKB"/>
</dbReference>
<dbReference type="GO" id="GO:0005829">
    <property type="term" value="C:cytosol"/>
    <property type="evidence" value="ECO:0000304"/>
    <property type="project" value="Reactome"/>
</dbReference>
<dbReference type="GO" id="GO:0005634">
    <property type="term" value="C:nucleus"/>
    <property type="evidence" value="ECO:0000314"/>
    <property type="project" value="UniProtKB"/>
</dbReference>
<dbReference type="GO" id="GO:0005524">
    <property type="term" value="F:ATP binding"/>
    <property type="evidence" value="ECO:0007669"/>
    <property type="project" value="UniProtKB-KW"/>
</dbReference>
<dbReference type="GO" id="GO:0106310">
    <property type="term" value="F:protein serine kinase activity"/>
    <property type="evidence" value="ECO:0007669"/>
    <property type="project" value="RHEA"/>
</dbReference>
<dbReference type="GO" id="GO:0004674">
    <property type="term" value="F:protein serine/threonine kinase activity"/>
    <property type="evidence" value="ECO:0000314"/>
    <property type="project" value="FlyBase"/>
</dbReference>
<dbReference type="GO" id="GO:0006281">
    <property type="term" value="P:DNA repair"/>
    <property type="evidence" value="ECO:0000314"/>
    <property type="project" value="FlyBase"/>
</dbReference>
<dbReference type="GO" id="GO:0042593">
    <property type="term" value="P:glucose homeostasis"/>
    <property type="evidence" value="ECO:0000315"/>
    <property type="project" value="FlyBase"/>
</dbReference>
<dbReference type="GO" id="GO:0090090">
    <property type="term" value="P:negative regulation of canonical Wnt signaling pathway"/>
    <property type="evidence" value="ECO:0000314"/>
    <property type="project" value="FlyBase"/>
</dbReference>
<dbReference type="GO" id="GO:0035331">
    <property type="term" value="P:negative regulation of hippo signaling"/>
    <property type="evidence" value="ECO:0000315"/>
    <property type="project" value="FlyBase"/>
</dbReference>
<dbReference type="GO" id="GO:0045879">
    <property type="term" value="P:negative regulation of smoothened signaling pathway"/>
    <property type="evidence" value="ECO:0000315"/>
    <property type="project" value="FlyBase"/>
</dbReference>
<dbReference type="GO" id="GO:1901800">
    <property type="term" value="P:positive regulation of proteasomal protein catabolic process"/>
    <property type="evidence" value="ECO:0000315"/>
    <property type="project" value="FlyBase"/>
</dbReference>
<dbReference type="GO" id="GO:0032436">
    <property type="term" value="P:positive regulation of proteasomal ubiquitin-dependent protein catabolic process"/>
    <property type="evidence" value="ECO:0000315"/>
    <property type="project" value="FlyBase"/>
</dbReference>
<dbReference type="GO" id="GO:0045880">
    <property type="term" value="P:positive regulation of smoothened signaling pathway"/>
    <property type="evidence" value="ECO:0000315"/>
    <property type="project" value="FlyBase"/>
</dbReference>
<dbReference type="GO" id="GO:0030949">
    <property type="term" value="P:positive regulation of vascular endothelial growth factor receptor signaling pathway"/>
    <property type="evidence" value="ECO:0000316"/>
    <property type="project" value="FlyBase"/>
</dbReference>
<dbReference type="GO" id="GO:0007165">
    <property type="term" value="P:signal transduction"/>
    <property type="evidence" value="ECO:0000318"/>
    <property type="project" value="GO_Central"/>
</dbReference>
<dbReference type="GO" id="GO:0016055">
    <property type="term" value="P:Wnt signaling pathway"/>
    <property type="evidence" value="ECO:0007669"/>
    <property type="project" value="UniProtKB-KW"/>
</dbReference>
<dbReference type="GO" id="GO:0035313">
    <property type="term" value="P:wound healing, spreading of epidermal cells"/>
    <property type="evidence" value="ECO:0000316"/>
    <property type="project" value="FlyBase"/>
</dbReference>
<dbReference type="FunFam" id="1.10.510.10:FF:000718">
    <property type="entry name" value="casein kinase I"/>
    <property type="match status" value="1"/>
</dbReference>
<dbReference type="Gene3D" id="1.10.510.10">
    <property type="entry name" value="Transferase(Phosphotransferase) domain 1"/>
    <property type="match status" value="1"/>
</dbReference>
<dbReference type="InterPro" id="IPR050235">
    <property type="entry name" value="CK1_Ser-Thr_kinase"/>
</dbReference>
<dbReference type="InterPro" id="IPR011009">
    <property type="entry name" value="Kinase-like_dom_sf"/>
</dbReference>
<dbReference type="InterPro" id="IPR000719">
    <property type="entry name" value="Prot_kinase_dom"/>
</dbReference>
<dbReference type="InterPro" id="IPR017441">
    <property type="entry name" value="Protein_kinase_ATP_BS"/>
</dbReference>
<dbReference type="InterPro" id="IPR008271">
    <property type="entry name" value="Ser/Thr_kinase_AS"/>
</dbReference>
<dbReference type="PANTHER" id="PTHR11909">
    <property type="entry name" value="CASEIN KINASE-RELATED"/>
    <property type="match status" value="1"/>
</dbReference>
<dbReference type="Pfam" id="PF00069">
    <property type="entry name" value="Pkinase"/>
    <property type="match status" value="1"/>
</dbReference>
<dbReference type="SMART" id="SM00220">
    <property type="entry name" value="S_TKc"/>
    <property type="match status" value="1"/>
</dbReference>
<dbReference type="SUPFAM" id="SSF56112">
    <property type="entry name" value="Protein kinase-like (PK-like)"/>
    <property type="match status" value="1"/>
</dbReference>
<dbReference type="PROSITE" id="PS00107">
    <property type="entry name" value="PROTEIN_KINASE_ATP"/>
    <property type="match status" value="1"/>
</dbReference>
<dbReference type="PROSITE" id="PS50011">
    <property type="entry name" value="PROTEIN_KINASE_DOM"/>
    <property type="match status" value="1"/>
</dbReference>
<dbReference type="PROSITE" id="PS00108">
    <property type="entry name" value="PROTEIN_KINASE_ST"/>
    <property type="match status" value="1"/>
</dbReference>
<gene>
    <name type="primary">CkIalpha</name>
    <name type="synonym">CKI</name>
    <name type="ORF">CG2028</name>
</gene>
<accession>P54367</accession>
<accession>A4V4D3</accession>
<accession>Q0KHT2</accession>
<accession>Q9VYK2</accession>
<keyword id="KW-0067">ATP-binding</keyword>
<keyword id="KW-0963">Cytoplasm</keyword>
<keyword id="KW-0418">Kinase</keyword>
<keyword id="KW-0460">Magnesium</keyword>
<keyword id="KW-0547">Nucleotide-binding</keyword>
<keyword id="KW-0539">Nucleus</keyword>
<keyword id="KW-1185">Reference proteome</keyword>
<keyword id="KW-0723">Serine/threonine-protein kinase</keyword>
<keyword id="KW-0808">Transferase</keyword>
<keyword id="KW-0879">Wnt signaling pathway</keyword>
<protein>
    <recommendedName>
        <fullName>Casein kinase I isoform alpha</fullName>
        <shortName>CKI-alpha</shortName>
        <shortName>DmCK1</shortName>
        <ecNumber>2.7.11.1</ecNumber>
    </recommendedName>
</protein>
<organism>
    <name type="scientific">Drosophila melanogaster</name>
    <name type="common">Fruit fly</name>
    <dbReference type="NCBI Taxonomy" id="7227"/>
    <lineage>
        <taxon>Eukaryota</taxon>
        <taxon>Metazoa</taxon>
        <taxon>Ecdysozoa</taxon>
        <taxon>Arthropoda</taxon>
        <taxon>Hexapoda</taxon>
        <taxon>Insecta</taxon>
        <taxon>Pterygota</taxon>
        <taxon>Neoptera</taxon>
        <taxon>Endopterygota</taxon>
        <taxon>Diptera</taxon>
        <taxon>Brachycera</taxon>
        <taxon>Muscomorpha</taxon>
        <taxon>Ephydroidea</taxon>
        <taxon>Drosophilidae</taxon>
        <taxon>Drosophila</taxon>
        <taxon>Sophophora</taxon>
    </lineage>
</organism>
<name>KC1A_DROME</name>
<evidence type="ECO:0000255" key="1">
    <source>
        <dbReference type="PROSITE-ProRule" id="PRU00159"/>
    </source>
</evidence>
<evidence type="ECO:0000255" key="2">
    <source>
        <dbReference type="PROSITE-ProRule" id="PRU10027"/>
    </source>
</evidence>
<evidence type="ECO:0000269" key="3">
    <source>
    </source>
</evidence>
<evidence type="ECO:0000269" key="4">
    <source>
    </source>
</evidence>
<evidence type="ECO:0000269" key="5">
    <source>
    </source>
</evidence>
<evidence type="ECO:0000269" key="6">
    <source>
    </source>
</evidence>
<evidence type="ECO:0000269" key="7">
    <source>
    </source>
</evidence>
<evidence type="ECO:0000269" key="8">
    <source>
    </source>
</evidence>
<evidence type="ECO:0000269" key="9">
    <source>
    </source>
</evidence>
<evidence type="ECO:0000269" key="10">
    <source>
    </source>
</evidence>
<evidence type="ECO:0000305" key="11"/>
<proteinExistence type="evidence at protein level"/>
<feature type="chain" id="PRO_0000192848" description="Casein kinase I isoform alpha">
    <location>
        <begin position="1"/>
        <end position="337"/>
    </location>
</feature>
<feature type="domain" description="Protein kinase" evidence="1">
    <location>
        <begin position="20"/>
        <end position="288"/>
    </location>
</feature>
<feature type="active site" description="Proton acceptor" evidence="1 2">
    <location>
        <position position="139"/>
    </location>
</feature>
<feature type="binding site" evidence="1">
    <location>
        <begin position="26"/>
        <end position="34"/>
    </location>
    <ligand>
        <name>ATP</name>
        <dbReference type="ChEBI" id="CHEBI:30616"/>
    </ligand>
</feature>
<feature type="binding site" evidence="1">
    <location>
        <position position="49"/>
    </location>
    <ligand>
        <name>ATP</name>
        <dbReference type="ChEBI" id="CHEBI:30616"/>
    </ligand>
</feature>
<feature type="mutagenesis site" description="In 8B12; death primarily during embryogenesis and early larval stages with no obvious cuticle patterning defects." evidence="8">
    <original>G</original>
    <variation>D</variation>
    <location>
        <position position="43"/>
    </location>
</feature>
<feature type="sequence conflict" description="In Ref. 2; CAA64358." evidence="11" ref="2">
    <original>GKPLIAD</original>
    <variation>ASP</variation>
    <location>
        <begin position="331"/>
        <end position="337"/>
    </location>
</feature>
<sequence length="337" mass="39535">MDKMRILKESRPEIIVGGKYRVIRKIGSGSFGDIYLGMSIQSGEEVAIKMESAHARHPQLLYEAKLYRILSGGVGFPRIRHHGKEKNFNTLVMDLLGPSLEDLFNFCTRHFTIKTVLMLVDQMIGRLEYIHLKCFIHRDIKPDNFLMGIGRHCNKLFLIDFGLAKKFRDPHTRHHIVYREDKNLTGTARYASINAHLGIEQSRRDDMESLGYVMMYFNRGVLPWQGMKANTKQQKYEKISEKKMSTPIEVLCKGSPAEFSMYLNYCRSLRFEEQPDYMYLRQLFRILFRTLNHQYDYIYDWTMLKQKTHQGQPNPAILLEQLDKDKEKQNGKPLIAD</sequence>
<comment type="function">
    <text evidence="3 4 5 7 8 9 10">Casein kinases are operationally defined by their preferential utilization of acidic proteins such as caseins as substrates. Can phosphorylate a large number of proteins. Negative regulator of wg signaling (PubMed:22095083). Phosphorylates arm directly or indirectly and stimulates its degradation which prevents inappropriate wg signaling (PubMed:11927557, PubMed:11955436, PubMed:22095083). Phosphorylates smo which promotes its accumulation at the cell surface and its signaling activity in response to hh (PubMed:15616566). Together with dco, regulates proteolytic processing of ci by phosphorylating it, which promotes its binding to slmb, the F-box recognition component of the SCF(slmb) E3 ubiquitin-protein ligase required for ci processing (PubMed:16326393). Inhibits condensin II interphase activity by promoting degradation of the Cap-H2 regulatory subunit and limiting the levels of chromatin-bound Cap-H2 which regulates interphase chromosome organization (PubMed:25723539).</text>
</comment>
<comment type="catalytic activity">
    <reaction>
        <text>L-seryl-[protein] + ATP = O-phospho-L-seryl-[protein] + ADP + H(+)</text>
        <dbReference type="Rhea" id="RHEA:17989"/>
        <dbReference type="Rhea" id="RHEA-COMP:9863"/>
        <dbReference type="Rhea" id="RHEA-COMP:11604"/>
        <dbReference type="ChEBI" id="CHEBI:15378"/>
        <dbReference type="ChEBI" id="CHEBI:29999"/>
        <dbReference type="ChEBI" id="CHEBI:30616"/>
        <dbReference type="ChEBI" id="CHEBI:83421"/>
        <dbReference type="ChEBI" id="CHEBI:456216"/>
        <dbReference type="EC" id="2.7.11.1"/>
    </reaction>
</comment>
<comment type="catalytic activity">
    <reaction>
        <text>L-threonyl-[protein] + ATP = O-phospho-L-threonyl-[protein] + ADP + H(+)</text>
        <dbReference type="Rhea" id="RHEA:46608"/>
        <dbReference type="Rhea" id="RHEA-COMP:11060"/>
        <dbReference type="Rhea" id="RHEA-COMP:11605"/>
        <dbReference type="ChEBI" id="CHEBI:15378"/>
        <dbReference type="ChEBI" id="CHEBI:30013"/>
        <dbReference type="ChEBI" id="CHEBI:30616"/>
        <dbReference type="ChEBI" id="CHEBI:61977"/>
        <dbReference type="ChEBI" id="CHEBI:456216"/>
        <dbReference type="EC" id="2.7.11.1"/>
    </reaction>
</comment>
<comment type="cofactor">
    <cofactor evidence="10">
        <name>Mg(2+)</name>
        <dbReference type="ChEBI" id="CHEBI:18420"/>
    </cofactor>
</comment>
<comment type="activity regulation">
    <text evidence="10">Activity increases following DNA damage.</text>
</comment>
<comment type="subunit">
    <text evidence="6">Interacts with cos.</text>
</comment>
<comment type="subcellular location">
    <subcellularLocation>
        <location evidence="6 10">Cytoplasm</location>
    </subcellularLocation>
    <subcellularLocation>
        <location evidence="6 10">Nucleus</location>
    </subcellularLocation>
    <text evidence="10">Levels in the nucleus are significantly increased after DNA damage.</text>
</comment>
<comment type="developmental stage">
    <text evidence="10">Expressed during early embryogenesis and in adult females (at protein level).</text>
</comment>
<comment type="PTM">
    <text evidence="10">Phosphorylated. The dephosphorylated kinase is active in the cytoplasm while the active kinase in the nucleus is phosphorylated.</text>
</comment>
<comment type="similarity">
    <text evidence="11">Belongs to the protein kinase superfamily. CK1 Ser/Thr protein kinase family. Casein kinase I subfamily.</text>
</comment>
<comment type="sequence caution" evidence="11">
    <conflict type="erroneous initiation">
        <sequence resource="EMBL-CDS" id="CAA64358"/>
    </conflict>
    <text>Truncated N-terminus.</text>
</comment>
<reference key="1">
    <citation type="submission" date="1996-04" db="EMBL/GenBank/DDBJ databases">
        <authorList>
            <person name="Glover C.V.C."/>
            <person name="Kandala G."/>
        </authorList>
    </citation>
    <scope>NUCLEOTIDE SEQUENCE [MRNA]</scope>
    <source>
        <strain>Canton-S</strain>
        <tissue>Embryo</tissue>
    </source>
</reference>
<reference key="2">
    <citation type="journal article" date="1996" name="J. Cell Sci.">
        <title>The casein kinase 1 alpha gene of Drosophila melanogaster is developmentally regulated and the kinase activity of the protein induced by DNA damage.</title>
        <authorList>
            <person name="Santos J.A."/>
            <person name="Logarinho E."/>
            <person name="Tapia C."/>
            <person name="Allende C.C."/>
            <person name="Allende J.E."/>
            <person name="Sunkel C.E."/>
        </authorList>
    </citation>
    <scope>NUCLEOTIDE SEQUENCE [MRNA]</scope>
    <scope>FUNCTION</scope>
    <scope>ACTIVITY REGULATION</scope>
    <scope>COFACTOR</scope>
    <scope>SUBCELLULAR LOCATION</scope>
    <scope>DEVELOPMENTAL STAGE</scope>
    <scope>PHOSPHORYLATION</scope>
    <source>
        <strain>Canton-S</strain>
        <tissue>Embryo</tissue>
    </source>
</reference>
<reference key="3">
    <citation type="journal article" date="2000" name="Science">
        <title>The genome sequence of Drosophila melanogaster.</title>
        <authorList>
            <person name="Adams M.D."/>
            <person name="Celniker S.E."/>
            <person name="Holt R.A."/>
            <person name="Evans C.A."/>
            <person name="Gocayne J.D."/>
            <person name="Amanatides P.G."/>
            <person name="Scherer S.E."/>
            <person name="Li P.W."/>
            <person name="Hoskins R.A."/>
            <person name="Galle R.F."/>
            <person name="George R.A."/>
            <person name="Lewis S.E."/>
            <person name="Richards S."/>
            <person name="Ashburner M."/>
            <person name="Henderson S.N."/>
            <person name="Sutton G.G."/>
            <person name="Wortman J.R."/>
            <person name="Yandell M.D."/>
            <person name="Zhang Q."/>
            <person name="Chen L.X."/>
            <person name="Brandon R.C."/>
            <person name="Rogers Y.-H.C."/>
            <person name="Blazej R.G."/>
            <person name="Champe M."/>
            <person name="Pfeiffer B.D."/>
            <person name="Wan K.H."/>
            <person name="Doyle C."/>
            <person name="Baxter E.G."/>
            <person name="Helt G."/>
            <person name="Nelson C.R."/>
            <person name="Miklos G.L.G."/>
            <person name="Abril J.F."/>
            <person name="Agbayani A."/>
            <person name="An H.-J."/>
            <person name="Andrews-Pfannkoch C."/>
            <person name="Baldwin D."/>
            <person name="Ballew R.M."/>
            <person name="Basu A."/>
            <person name="Baxendale J."/>
            <person name="Bayraktaroglu L."/>
            <person name="Beasley E.M."/>
            <person name="Beeson K.Y."/>
            <person name="Benos P.V."/>
            <person name="Berman B.P."/>
            <person name="Bhandari D."/>
            <person name="Bolshakov S."/>
            <person name="Borkova D."/>
            <person name="Botchan M.R."/>
            <person name="Bouck J."/>
            <person name="Brokstein P."/>
            <person name="Brottier P."/>
            <person name="Burtis K.C."/>
            <person name="Busam D.A."/>
            <person name="Butler H."/>
            <person name="Cadieu E."/>
            <person name="Center A."/>
            <person name="Chandra I."/>
            <person name="Cherry J.M."/>
            <person name="Cawley S."/>
            <person name="Dahlke C."/>
            <person name="Davenport L.B."/>
            <person name="Davies P."/>
            <person name="de Pablos B."/>
            <person name="Delcher A."/>
            <person name="Deng Z."/>
            <person name="Mays A.D."/>
            <person name="Dew I."/>
            <person name="Dietz S.M."/>
            <person name="Dodson K."/>
            <person name="Doup L.E."/>
            <person name="Downes M."/>
            <person name="Dugan-Rocha S."/>
            <person name="Dunkov B.C."/>
            <person name="Dunn P."/>
            <person name="Durbin K.J."/>
            <person name="Evangelista C.C."/>
            <person name="Ferraz C."/>
            <person name="Ferriera S."/>
            <person name="Fleischmann W."/>
            <person name="Fosler C."/>
            <person name="Gabrielian A.E."/>
            <person name="Garg N.S."/>
            <person name="Gelbart W.M."/>
            <person name="Glasser K."/>
            <person name="Glodek A."/>
            <person name="Gong F."/>
            <person name="Gorrell J.H."/>
            <person name="Gu Z."/>
            <person name="Guan P."/>
            <person name="Harris M."/>
            <person name="Harris N.L."/>
            <person name="Harvey D.A."/>
            <person name="Heiman T.J."/>
            <person name="Hernandez J.R."/>
            <person name="Houck J."/>
            <person name="Hostin D."/>
            <person name="Houston K.A."/>
            <person name="Howland T.J."/>
            <person name="Wei M.-H."/>
            <person name="Ibegwam C."/>
            <person name="Jalali M."/>
            <person name="Kalush F."/>
            <person name="Karpen G.H."/>
            <person name="Ke Z."/>
            <person name="Kennison J.A."/>
            <person name="Ketchum K.A."/>
            <person name="Kimmel B.E."/>
            <person name="Kodira C.D."/>
            <person name="Kraft C.L."/>
            <person name="Kravitz S."/>
            <person name="Kulp D."/>
            <person name="Lai Z."/>
            <person name="Lasko P."/>
            <person name="Lei Y."/>
            <person name="Levitsky A.A."/>
            <person name="Li J.H."/>
            <person name="Li Z."/>
            <person name="Liang Y."/>
            <person name="Lin X."/>
            <person name="Liu X."/>
            <person name="Mattei B."/>
            <person name="McIntosh T.C."/>
            <person name="McLeod M.P."/>
            <person name="McPherson D."/>
            <person name="Merkulov G."/>
            <person name="Milshina N.V."/>
            <person name="Mobarry C."/>
            <person name="Morris J."/>
            <person name="Moshrefi A."/>
            <person name="Mount S.M."/>
            <person name="Moy M."/>
            <person name="Murphy B."/>
            <person name="Murphy L."/>
            <person name="Muzny D.M."/>
            <person name="Nelson D.L."/>
            <person name="Nelson D.R."/>
            <person name="Nelson K.A."/>
            <person name="Nixon K."/>
            <person name="Nusskern D.R."/>
            <person name="Pacleb J.M."/>
            <person name="Palazzolo M."/>
            <person name="Pittman G.S."/>
            <person name="Pan S."/>
            <person name="Pollard J."/>
            <person name="Puri V."/>
            <person name="Reese M.G."/>
            <person name="Reinert K."/>
            <person name="Remington K."/>
            <person name="Saunders R.D.C."/>
            <person name="Scheeler F."/>
            <person name="Shen H."/>
            <person name="Shue B.C."/>
            <person name="Siden-Kiamos I."/>
            <person name="Simpson M."/>
            <person name="Skupski M.P."/>
            <person name="Smith T.J."/>
            <person name="Spier E."/>
            <person name="Spradling A.C."/>
            <person name="Stapleton M."/>
            <person name="Strong R."/>
            <person name="Sun E."/>
            <person name="Svirskas R."/>
            <person name="Tector C."/>
            <person name="Turner R."/>
            <person name="Venter E."/>
            <person name="Wang A.H."/>
            <person name="Wang X."/>
            <person name="Wang Z.-Y."/>
            <person name="Wassarman D.A."/>
            <person name="Weinstock G.M."/>
            <person name="Weissenbach J."/>
            <person name="Williams S.M."/>
            <person name="Woodage T."/>
            <person name="Worley K.C."/>
            <person name="Wu D."/>
            <person name="Yang S."/>
            <person name="Yao Q.A."/>
            <person name="Ye J."/>
            <person name="Yeh R.-F."/>
            <person name="Zaveri J.S."/>
            <person name="Zhan M."/>
            <person name="Zhang G."/>
            <person name="Zhao Q."/>
            <person name="Zheng L."/>
            <person name="Zheng X.H."/>
            <person name="Zhong F.N."/>
            <person name="Zhong W."/>
            <person name="Zhou X."/>
            <person name="Zhu S.C."/>
            <person name="Zhu X."/>
            <person name="Smith H.O."/>
            <person name="Gibbs R.A."/>
            <person name="Myers E.W."/>
            <person name="Rubin G.M."/>
            <person name="Venter J.C."/>
        </authorList>
    </citation>
    <scope>NUCLEOTIDE SEQUENCE [LARGE SCALE GENOMIC DNA]</scope>
    <source>
        <strain>Berkeley</strain>
    </source>
</reference>
<reference key="4">
    <citation type="journal article" date="2002" name="Genome Biol.">
        <title>Annotation of the Drosophila melanogaster euchromatic genome: a systematic review.</title>
        <authorList>
            <person name="Misra S."/>
            <person name="Crosby M.A."/>
            <person name="Mungall C.J."/>
            <person name="Matthews B.B."/>
            <person name="Campbell K.S."/>
            <person name="Hradecky P."/>
            <person name="Huang Y."/>
            <person name="Kaminker J.S."/>
            <person name="Millburn G.H."/>
            <person name="Prochnik S.E."/>
            <person name="Smith C.D."/>
            <person name="Tupy J.L."/>
            <person name="Whitfield E.J."/>
            <person name="Bayraktaroglu L."/>
            <person name="Berman B.P."/>
            <person name="Bettencourt B.R."/>
            <person name="Celniker S.E."/>
            <person name="de Grey A.D.N.J."/>
            <person name="Drysdale R.A."/>
            <person name="Harris N.L."/>
            <person name="Richter J."/>
            <person name="Russo S."/>
            <person name="Schroeder A.J."/>
            <person name="Shu S.Q."/>
            <person name="Stapleton M."/>
            <person name="Yamada C."/>
            <person name="Ashburner M."/>
            <person name="Gelbart W.M."/>
            <person name="Rubin G.M."/>
            <person name="Lewis S.E."/>
        </authorList>
    </citation>
    <scope>GENOME REANNOTATION</scope>
    <source>
        <strain>Berkeley</strain>
    </source>
</reference>
<reference key="5">
    <citation type="journal article" date="2002" name="Genome Biol.">
        <title>A Drosophila full-length cDNA resource.</title>
        <authorList>
            <person name="Stapleton M."/>
            <person name="Carlson J.W."/>
            <person name="Brokstein P."/>
            <person name="Yu C."/>
            <person name="Champe M."/>
            <person name="George R.A."/>
            <person name="Guarin H."/>
            <person name="Kronmiller B."/>
            <person name="Pacleb J.M."/>
            <person name="Park S."/>
            <person name="Wan K.H."/>
            <person name="Rubin G.M."/>
            <person name="Celniker S.E."/>
        </authorList>
    </citation>
    <scope>NUCLEOTIDE SEQUENCE [LARGE SCALE MRNA]</scope>
    <source>
        <strain>Berkeley</strain>
        <tissue>Embryo</tissue>
    </source>
</reference>
<reference key="6">
    <citation type="journal article" date="2002" name="Cell">
        <title>Control of beta-catenin phosphorylation/degradation by a dual-kinase mechanism.</title>
        <authorList>
            <person name="Liu C."/>
            <person name="Li Y."/>
            <person name="Semenov M."/>
            <person name="Han C."/>
            <person name="Baeg G.-H."/>
            <person name="Tan Y."/>
            <person name="Zhang Z."/>
            <person name="Lin X."/>
            <person name="He X."/>
        </authorList>
    </citation>
    <scope>FUNCTION</scope>
</reference>
<reference key="7">
    <citation type="journal article" date="2002" name="EMBO J.">
        <title>Casein kinase I phosphorylates the Armadillo protein and induces its degradation in Drosophila.</title>
        <authorList>
            <person name="Yanagawa S."/>
            <person name="Matsuda Y."/>
            <person name="Lee J.S."/>
            <person name="Matsubayashi H."/>
            <person name="Sese S."/>
            <person name="Kadowaki T."/>
            <person name="Ishimoto A."/>
        </authorList>
    </citation>
    <scope>FUNCTION</scope>
</reference>
<reference key="8">
    <citation type="journal article" date="2004" name="Nature">
        <title>Hedgehog signalling activity of Smoothened requires phosphorylation by protein kinase A and casein kinase I.</title>
        <authorList>
            <person name="Jia J."/>
            <person name="Tong C."/>
            <person name="Wang B."/>
            <person name="Luo L."/>
            <person name="Jiang J."/>
        </authorList>
    </citation>
    <scope>FUNCTION</scope>
</reference>
<reference key="9">
    <citation type="journal article" date="2005" name="Dev. Cell">
        <title>Hedgehog-regulated Costal2-kinase complexes control phosphorylation and proteolytic processing of Cubitus interruptus.</title>
        <authorList>
            <person name="Zhang W."/>
            <person name="Zhao Y."/>
            <person name="Tong C."/>
            <person name="Wang G."/>
            <person name="Wang B."/>
            <person name="Jia J."/>
            <person name="Jiang J."/>
        </authorList>
    </citation>
    <scope>SUBCELLULAR LOCATION</scope>
    <scope>INTERACTION WITH COS</scope>
</reference>
<reference key="10">
    <citation type="journal article" date="2005" name="Dev. Cell">
        <title>Phosphorylation by double-time/CKIepsilon and CKIalpha targets cubitus interruptus for Slimb/beta-TRCP-mediated proteolytic processing.</title>
        <authorList>
            <person name="Jia J."/>
            <person name="Zhang L."/>
            <person name="Zhang Q."/>
            <person name="Tong C."/>
            <person name="Wang B."/>
            <person name="Hou F."/>
            <person name="Amanai K."/>
            <person name="Jiang J."/>
        </authorList>
    </citation>
    <scope>FUNCTION</scope>
</reference>
<reference key="11">
    <citation type="journal article" date="2012" name="Genetics">
        <title>A screen for X-linked mutations affecting Drosophila photoreceptor differentiation identifies Casein kinase 1alpha as an essential negative regulator of wingless signaling.</title>
        <authorList>
            <person name="Legent K."/>
            <person name="Steinhauer J."/>
            <person name="Richard M."/>
            <person name="Treisman J.E."/>
        </authorList>
    </citation>
    <scope>FUNCTION</scope>
    <scope>MUTAGENESIS OF GLY-43</scope>
</reference>
<reference key="12">
    <citation type="journal article" date="2015" name="PLoS Genet.">
        <title>Drosophila casein kinase I alpha regulates homolog pairing and genome organization by modulating condensin II subunit Cap-H2 levels.</title>
        <authorList>
            <person name="Nguyen H.Q."/>
            <person name="Nye J."/>
            <person name="Buster D.W."/>
            <person name="Klebba J.E."/>
            <person name="Rogers G.C."/>
            <person name="Bosco G."/>
        </authorList>
    </citation>
    <scope>FUNCTION</scope>
</reference>